<feature type="chain" id="PRO_1000017987" description="Arginine--tRNA ligase">
    <location>
        <begin position="1"/>
        <end position="556"/>
    </location>
</feature>
<feature type="short sequence motif" description="'HIGH' region">
    <location>
        <begin position="132"/>
        <end position="142"/>
    </location>
</feature>
<proteinExistence type="inferred from homology"/>
<organism>
    <name type="scientific">Bacillus velezensis (strain DSM 23117 / BGSC 10A6 / LMG 26770 / FZB42)</name>
    <name type="common">Bacillus amyloliquefaciens subsp. plantarum</name>
    <dbReference type="NCBI Taxonomy" id="326423"/>
    <lineage>
        <taxon>Bacteria</taxon>
        <taxon>Bacillati</taxon>
        <taxon>Bacillota</taxon>
        <taxon>Bacilli</taxon>
        <taxon>Bacillales</taxon>
        <taxon>Bacillaceae</taxon>
        <taxon>Bacillus</taxon>
        <taxon>Bacillus amyloliquefaciens group</taxon>
    </lineage>
</organism>
<gene>
    <name evidence="1" type="primary">argS</name>
    <name type="ordered locus">RBAM_034480</name>
</gene>
<reference key="1">
    <citation type="journal article" date="2007" name="Nat. Biotechnol.">
        <title>Comparative analysis of the complete genome sequence of the plant growth-promoting bacterium Bacillus amyloliquefaciens FZB42.</title>
        <authorList>
            <person name="Chen X.H."/>
            <person name="Koumoutsi A."/>
            <person name="Scholz R."/>
            <person name="Eisenreich A."/>
            <person name="Schneider K."/>
            <person name="Heinemeyer I."/>
            <person name="Morgenstern B."/>
            <person name="Voss B."/>
            <person name="Hess W.R."/>
            <person name="Reva O."/>
            <person name="Junge H."/>
            <person name="Voigt B."/>
            <person name="Jungblut P.R."/>
            <person name="Vater J."/>
            <person name="Suessmuth R."/>
            <person name="Liesegang H."/>
            <person name="Strittmatter A."/>
            <person name="Gottschalk G."/>
            <person name="Borriss R."/>
        </authorList>
    </citation>
    <scope>NUCLEOTIDE SEQUENCE [LARGE SCALE GENOMIC DNA]</scope>
    <source>
        <strain>DSM 23117 / BGSC 10A6 / LMG 26770 / FZB42</strain>
    </source>
</reference>
<accession>A7Z9V1</accession>
<evidence type="ECO:0000255" key="1">
    <source>
        <dbReference type="HAMAP-Rule" id="MF_00123"/>
    </source>
</evidence>
<protein>
    <recommendedName>
        <fullName evidence="1">Arginine--tRNA ligase</fullName>
        <ecNumber evidence="1">6.1.1.19</ecNumber>
    </recommendedName>
    <alternativeName>
        <fullName evidence="1">Arginyl-tRNA synthetase</fullName>
        <shortName evidence="1">ArgRS</shortName>
    </alternativeName>
</protein>
<keyword id="KW-0030">Aminoacyl-tRNA synthetase</keyword>
<keyword id="KW-0067">ATP-binding</keyword>
<keyword id="KW-0963">Cytoplasm</keyword>
<keyword id="KW-0436">Ligase</keyword>
<keyword id="KW-0547">Nucleotide-binding</keyword>
<keyword id="KW-0648">Protein biosynthesis</keyword>
<dbReference type="EC" id="6.1.1.19" evidence="1"/>
<dbReference type="EMBL" id="CP000560">
    <property type="protein sequence ID" value="ABS75777.1"/>
    <property type="molecule type" value="Genomic_DNA"/>
</dbReference>
<dbReference type="RefSeq" id="WP_007407633.1">
    <property type="nucleotide sequence ID" value="NC_009725.2"/>
</dbReference>
<dbReference type="SMR" id="A7Z9V1"/>
<dbReference type="GeneID" id="93082592"/>
<dbReference type="KEGG" id="bay:RBAM_034480"/>
<dbReference type="HOGENOM" id="CLU_006406_0_1_9"/>
<dbReference type="Proteomes" id="UP000001120">
    <property type="component" value="Chromosome"/>
</dbReference>
<dbReference type="GO" id="GO:0005737">
    <property type="term" value="C:cytoplasm"/>
    <property type="evidence" value="ECO:0007669"/>
    <property type="project" value="UniProtKB-SubCell"/>
</dbReference>
<dbReference type="GO" id="GO:0004814">
    <property type="term" value="F:arginine-tRNA ligase activity"/>
    <property type="evidence" value="ECO:0007669"/>
    <property type="project" value="UniProtKB-UniRule"/>
</dbReference>
<dbReference type="GO" id="GO:0005524">
    <property type="term" value="F:ATP binding"/>
    <property type="evidence" value="ECO:0007669"/>
    <property type="project" value="UniProtKB-UniRule"/>
</dbReference>
<dbReference type="GO" id="GO:0006420">
    <property type="term" value="P:arginyl-tRNA aminoacylation"/>
    <property type="evidence" value="ECO:0007669"/>
    <property type="project" value="UniProtKB-UniRule"/>
</dbReference>
<dbReference type="CDD" id="cd07956">
    <property type="entry name" value="Anticodon_Ia_Arg"/>
    <property type="match status" value="1"/>
</dbReference>
<dbReference type="CDD" id="cd00671">
    <property type="entry name" value="ArgRS_core"/>
    <property type="match status" value="1"/>
</dbReference>
<dbReference type="FunFam" id="1.10.730.10:FF:000008">
    <property type="entry name" value="Arginine--tRNA ligase"/>
    <property type="match status" value="1"/>
</dbReference>
<dbReference type="FunFam" id="3.30.1360.70:FF:000003">
    <property type="entry name" value="Arginine--tRNA ligase"/>
    <property type="match status" value="1"/>
</dbReference>
<dbReference type="FunFam" id="3.40.50.620:FF:000062">
    <property type="entry name" value="Arginine--tRNA ligase"/>
    <property type="match status" value="1"/>
</dbReference>
<dbReference type="Gene3D" id="3.30.1360.70">
    <property type="entry name" value="Arginyl tRNA synthetase N-terminal domain"/>
    <property type="match status" value="1"/>
</dbReference>
<dbReference type="Gene3D" id="3.40.50.620">
    <property type="entry name" value="HUPs"/>
    <property type="match status" value="1"/>
</dbReference>
<dbReference type="Gene3D" id="1.10.730.10">
    <property type="entry name" value="Isoleucyl-tRNA Synthetase, Domain 1"/>
    <property type="match status" value="1"/>
</dbReference>
<dbReference type="HAMAP" id="MF_00123">
    <property type="entry name" value="Arg_tRNA_synth"/>
    <property type="match status" value="1"/>
</dbReference>
<dbReference type="InterPro" id="IPR001412">
    <property type="entry name" value="aa-tRNA-synth_I_CS"/>
</dbReference>
<dbReference type="InterPro" id="IPR001278">
    <property type="entry name" value="Arg-tRNA-ligase"/>
</dbReference>
<dbReference type="InterPro" id="IPR005148">
    <property type="entry name" value="Arg-tRNA-synth_N"/>
</dbReference>
<dbReference type="InterPro" id="IPR036695">
    <property type="entry name" value="Arg-tRNA-synth_N_sf"/>
</dbReference>
<dbReference type="InterPro" id="IPR035684">
    <property type="entry name" value="ArgRS_core"/>
</dbReference>
<dbReference type="InterPro" id="IPR008909">
    <property type="entry name" value="DALR_anticod-bd"/>
</dbReference>
<dbReference type="InterPro" id="IPR014729">
    <property type="entry name" value="Rossmann-like_a/b/a_fold"/>
</dbReference>
<dbReference type="InterPro" id="IPR009080">
    <property type="entry name" value="tRNAsynth_Ia_anticodon-bd"/>
</dbReference>
<dbReference type="NCBIfam" id="TIGR00456">
    <property type="entry name" value="argS"/>
    <property type="match status" value="1"/>
</dbReference>
<dbReference type="PANTHER" id="PTHR11956:SF5">
    <property type="entry name" value="ARGININE--TRNA LIGASE, CYTOPLASMIC"/>
    <property type="match status" value="1"/>
</dbReference>
<dbReference type="PANTHER" id="PTHR11956">
    <property type="entry name" value="ARGINYL-TRNA SYNTHETASE"/>
    <property type="match status" value="1"/>
</dbReference>
<dbReference type="Pfam" id="PF03485">
    <property type="entry name" value="Arg_tRNA_synt_N"/>
    <property type="match status" value="1"/>
</dbReference>
<dbReference type="Pfam" id="PF05746">
    <property type="entry name" value="DALR_1"/>
    <property type="match status" value="1"/>
</dbReference>
<dbReference type="Pfam" id="PF00750">
    <property type="entry name" value="tRNA-synt_1d"/>
    <property type="match status" value="1"/>
</dbReference>
<dbReference type="PRINTS" id="PR01038">
    <property type="entry name" value="TRNASYNTHARG"/>
</dbReference>
<dbReference type="SMART" id="SM01016">
    <property type="entry name" value="Arg_tRNA_synt_N"/>
    <property type="match status" value="1"/>
</dbReference>
<dbReference type="SMART" id="SM00836">
    <property type="entry name" value="DALR_1"/>
    <property type="match status" value="1"/>
</dbReference>
<dbReference type="SUPFAM" id="SSF47323">
    <property type="entry name" value="Anticodon-binding domain of a subclass of class I aminoacyl-tRNA synthetases"/>
    <property type="match status" value="1"/>
</dbReference>
<dbReference type="SUPFAM" id="SSF55190">
    <property type="entry name" value="Arginyl-tRNA synthetase (ArgRS), N-terminal 'additional' domain"/>
    <property type="match status" value="1"/>
</dbReference>
<dbReference type="SUPFAM" id="SSF52374">
    <property type="entry name" value="Nucleotidylyl transferase"/>
    <property type="match status" value="1"/>
</dbReference>
<dbReference type="PROSITE" id="PS00178">
    <property type="entry name" value="AA_TRNA_LIGASE_I"/>
    <property type="match status" value="1"/>
</dbReference>
<name>SYR_BACVZ</name>
<comment type="catalytic activity">
    <reaction evidence="1">
        <text>tRNA(Arg) + L-arginine + ATP = L-arginyl-tRNA(Arg) + AMP + diphosphate</text>
        <dbReference type="Rhea" id="RHEA:20301"/>
        <dbReference type="Rhea" id="RHEA-COMP:9658"/>
        <dbReference type="Rhea" id="RHEA-COMP:9673"/>
        <dbReference type="ChEBI" id="CHEBI:30616"/>
        <dbReference type="ChEBI" id="CHEBI:32682"/>
        <dbReference type="ChEBI" id="CHEBI:33019"/>
        <dbReference type="ChEBI" id="CHEBI:78442"/>
        <dbReference type="ChEBI" id="CHEBI:78513"/>
        <dbReference type="ChEBI" id="CHEBI:456215"/>
        <dbReference type="EC" id="6.1.1.19"/>
    </reaction>
</comment>
<comment type="subunit">
    <text evidence="1">Monomer.</text>
</comment>
<comment type="subcellular location">
    <subcellularLocation>
        <location evidence="1">Cytoplasm</location>
    </subcellularLocation>
</comment>
<comment type="similarity">
    <text evidence="1">Belongs to the class-I aminoacyl-tRNA synthetase family.</text>
</comment>
<sequence length="556" mass="62584">MNIAEQMKDVLKEEIKAAVLKAGLADESQIPSVLLETPKEKTHGDYSTNMAMQLARIAKKAPRQIAEEIVASFDKGKASIEKMDIAGPGFINFYMNNSYLTKLIPSVLEAGEHYGETNIGQGEKIQVEFVSANPTGDLHLGHARGAAVGDALCSVLSKAGYDVSREYYINDAGNQINNLALSVEVRYFEALGLEKPMPEDGYRGEDIIAIGKKLAEDFGDRFVHEEESERQAFFREYGLKYELDKLRSDLENFRVPFDVWYSETSLYENGKIDQALEALREKGHVYEEDGATWFRSTTFGDDKDRVLIKKDGSYTYLLPDIAYHKDKLDRGFDKLINVWGADHHGYIPRMKAAIEALGYKKGTLEVEIIQLVHLYKNGEKMKMSKRTGKAVTMRDLIEEVGLDAVRYFFAMRSADTHMDFDLDLAVSTSNENPVYYAQYAHARICSMLRQGEEQGLKPAADLDFSHIQSEKEYDLLKTIGGFPEAVAEAAEKRIPHRVTNYIYDLASALHSFYNAEKVIDPENKEKSRARLALMKATQITLNNALQLIGVSAPEKM</sequence>